<protein>
    <recommendedName>
        <fullName>Hepatocyte growth factor receptor</fullName>
        <shortName>HGF receptor</shortName>
        <ecNumber>2.7.10.1</ecNumber>
    </recommendedName>
    <alternativeName>
        <fullName>HGF/SF receptor</fullName>
    </alternativeName>
    <alternativeName>
        <fullName>Proto-oncogene c-Met</fullName>
    </alternativeName>
    <alternativeName>
        <fullName>Scatter factor receptor</fullName>
        <shortName>SF receptor</shortName>
    </alternativeName>
    <alternativeName>
        <fullName>Tyrosine-protein kinase Met</fullName>
    </alternativeName>
</protein>
<name>MET_NOMLE</name>
<organism>
    <name type="scientific">Nomascus leucogenys</name>
    <name type="common">Northern white-cheeked gibbon</name>
    <name type="synonym">Hylobates leucogenys</name>
    <dbReference type="NCBI Taxonomy" id="61853"/>
    <lineage>
        <taxon>Eukaryota</taxon>
        <taxon>Metazoa</taxon>
        <taxon>Chordata</taxon>
        <taxon>Craniata</taxon>
        <taxon>Vertebrata</taxon>
        <taxon>Euteleostomi</taxon>
        <taxon>Mammalia</taxon>
        <taxon>Eutheria</taxon>
        <taxon>Euarchontoglires</taxon>
        <taxon>Primates</taxon>
        <taxon>Haplorrhini</taxon>
        <taxon>Catarrhini</taxon>
        <taxon>Hylobatidae</taxon>
        <taxon>Nomascus</taxon>
    </lineage>
</organism>
<feature type="signal peptide" evidence="4">
    <location>
        <begin position="1"/>
        <end position="24"/>
    </location>
</feature>
<feature type="chain" id="PRO_0000260424" description="Hepatocyte growth factor receptor">
    <location>
        <begin position="25"/>
        <end position="1390"/>
    </location>
</feature>
<feature type="topological domain" description="Extracellular" evidence="4">
    <location>
        <begin position="25"/>
        <end position="932"/>
    </location>
</feature>
<feature type="transmembrane region" description="Helical" evidence="4">
    <location>
        <begin position="933"/>
        <end position="955"/>
    </location>
</feature>
<feature type="topological domain" description="Cytoplasmic" evidence="4">
    <location>
        <begin position="956"/>
        <end position="1390"/>
    </location>
</feature>
<feature type="domain" description="Sema" evidence="6">
    <location>
        <begin position="27"/>
        <end position="515"/>
    </location>
</feature>
<feature type="domain" description="IPT/TIG 1">
    <location>
        <begin position="563"/>
        <end position="655"/>
    </location>
</feature>
<feature type="domain" description="IPT/TIG 2">
    <location>
        <begin position="657"/>
        <end position="739"/>
    </location>
</feature>
<feature type="domain" description="IPT/TIG 3">
    <location>
        <begin position="742"/>
        <end position="836"/>
    </location>
</feature>
<feature type="domain" description="Protein kinase" evidence="5">
    <location>
        <begin position="1078"/>
        <end position="1345"/>
    </location>
</feature>
<feature type="region of interest" description="Interaction with RANBP9" evidence="1">
    <location>
        <begin position="1212"/>
        <end position="1381"/>
    </location>
</feature>
<feature type="region of interest" description="Interaction with MUC20" evidence="1">
    <location>
        <begin position="1320"/>
        <end position="1359"/>
    </location>
</feature>
<feature type="active site" description="Proton acceptor" evidence="5 7">
    <location>
        <position position="1204"/>
    </location>
</feature>
<feature type="binding site" evidence="5">
    <location>
        <begin position="1084"/>
        <end position="1092"/>
    </location>
    <ligand>
        <name>ATP</name>
        <dbReference type="ChEBI" id="CHEBI:30616"/>
    </ligand>
</feature>
<feature type="binding site" evidence="5">
    <location>
        <position position="1110"/>
    </location>
    <ligand>
        <name>ATP</name>
        <dbReference type="ChEBI" id="CHEBI:30616"/>
    </ligand>
</feature>
<feature type="site" description="Cleavage" evidence="4">
    <location>
        <begin position="307"/>
        <end position="308"/>
    </location>
</feature>
<feature type="modified residue" description="Phosphoserine" evidence="2">
    <location>
        <position position="966"/>
    </location>
</feature>
<feature type="modified residue" description="Phosphothreonine" evidence="2">
    <location>
        <position position="977"/>
    </location>
</feature>
<feature type="modified residue" description="Phosphoserine" evidence="2">
    <location>
        <position position="990"/>
    </location>
</feature>
<feature type="modified residue" description="Phosphoserine" evidence="2">
    <location>
        <position position="997"/>
    </location>
</feature>
<feature type="modified residue" description="Phosphoserine" evidence="2">
    <location>
        <position position="1000"/>
    </location>
</feature>
<feature type="modified residue" description="Phosphotyrosine" evidence="2">
    <location>
        <position position="1003"/>
    </location>
</feature>
<feature type="modified residue" description="Phosphotyrosine" evidence="2">
    <location>
        <position position="1230"/>
    </location>
</feature>
<feature type="modified residue" description="Phosphotyrosine; by autocatalysis" evidence="2">
    <location>
        <position position="1234"/>
    </location>
</feature>
<feature type="modified residue" description="Phosphotyrosine; by autocatalysis" evidence="2">
    <location>
        <position position="1235"/>
    </location>
</feature>
<feature type="modified residue" description="Phosphothreonine" evidence="2">
    <location>
        <position position="1289"/>
    </location>
</feature>
<feature type="modified residue" description="Phosphotyrosine; by autocatalysis" evidence="2">
    <location>
        <position position="1349"/>
    </location>
</feature>
<feature type="modified residue" description="Phosphotyrosine; by autocatalysis" evidence="2">
    <location>
        <position position="1356"/>
    </location>
</feature>
<feature type="modified residue" description="Phosphotyrosine" evidence="2">
    <location>
        <position position="1365"/>
    </location>
</feature>
<feature type="glycosylation site" description="N-linked (GlcNAc...) asparagine" evidence="4">
    <location>
        <position position="45"/>
    </location>
</feature>
<feature type="glycosylation site" description="N-linked (GlcNAc...) asparagine" evidence="4">
    <location>
        <position position="106"/>
    </location>
</feature>
<feature type="glycosylation site" description="N-linked (GlcNAc...) asparagine" evidence="4">
    <location>
        <position position="149"/>
    </location>
</feature>
<feature type="glycosylation site" description="N-linked (GlcNAc...) asparagine" evidence="4">
    <location>
        <position position="202"/>
    </location>
</feature>
<feature type="glycosylation site" description="N-linked (GlcNAc...) asparagine" evidence="4">
    <location>
        <position position="399"/>
    </location>
</feature>
<feature type="glycosylation site" description="N-linked (GlcNAc...) asparagine" evidence="4">
    <location>
        <position position="405"/>
    </location>
</feature>
<feature type="glycosylation site" description="O-linked (Man) threonine" evidence="2">
    <location>
        <position position="582"/>
    </location>
</feature>
<feature type="glycosylation site" description="N-linked (GlcNAc...) asparagine" evidence="4">
    <location>
        <position position="607"/>
    </location>
</feature>
<feature type="glycosylation site" description="N-linked (GlcNAc...) asparagine" evidence="4">
    <location>
        <position position="635"/>
    </location>
</feature>
<feature type="glycosylation site" description="O-linked (Man) threonine" evidence="2">
    <location>
        <position position="676"/>
    </location>
</feature>
<feature type="glycosylation site" description="O-linked (Man) threonine" evidence="2">
    <location>
        <position position="761"/>
    </location>
</feature>
<feature type="glycosylation site" description="N-linked (GlcNAc...) asparagine" evidence="4">
    <location>
        <position position="785"/>
    </location>
</feature>
<feature type="glycosylation site" description="N-linked (GlcNAc...) asparagine" evidence="4">
    <location>
        <position position="879"/>
    </location>
</feature>
<feature type="glycosylation site" description="N-linked (GlcNAc...) asparagine" evidence="4">
    <location>
        <position position="930"/>
    </location>
</feature>
<feature type="disulfide bond" evidence="6">
    <location>
        <begin position="95"/>
        <end position="101"/>
    </location>
</feature>
<feature type="disulfide bond" evidence="6">
    <location>
        <begin position="98"/>
        <end position="160"/>
    </location>
</feature>
<feature type="disulfide bond" evidence="6">
    <location>
        <begin position="133"/>
        <end position="141"/>
    </location>
</feature>
<feature type="disulfide bond" evidence="6">
    <location>
        <begin position="172"/>
        <end position="175"/>
    </location>
</feature>
<feature type="disulfide bond" evidence="6">
    <location>
        <begin position="298"/>
        <end position="363"/>
    </location>
</feature>
<feature type="disulfide bond" evidence="6">
    <location>
        <begin position="385"/>
        <end position="397"/>
    </location>
</feature>
<feature type="disulfide bond" evidence="6">
    <location>
        <begin position="520"/>
        <end position="538"/>
    </location>
</feature>
<feature type="disulfide bond" evidence="6">
    <location>
        <begin position="526"/>
        <end position="561"/>
    </location>
</feature>
<feature type="disulfide bond" evidence="6">
    <location>
        <begin position="529"/>
        <end position="545"/>
    </location>
</feature>
<feature type="disulfide bond" evidence="6">
    <location>
        <begin position="541"/>
        <end position="551"/>
    </location>
</feature>
<keyword id="KW-0067">ATP-binding</keyword>
<keyword id="KW-1015">Disulfide bond</keyword>
<keyword id="KW-0325">Glycoprotein</keyword>
<keyword id="KW-0418">Kinase</keyword>
<keyword id="KW-0472">Membrane</keyword>
<keyword id="KW-0547">Nucleotide-binding</keyword>
<keyword id="KW-0597">Phosphoprotein</keyword>
<keyword id="KW-0656">Proto-oncogene</keyword>
<keyword id="KW-0675">Receptor</keyword>
<keyword id="KW-1185">Reference proteome</keyword>
<keyword id="KW-0677">Repeat</keyword>
<keyword id="KW-0732">Signal</keyword>
<keyword id="KW-0808">Transferase</keyword>
<keyword id="KW-0812">Transmembrane</keyword>
<keyword id="KW-1133">Transmembrane helix</keyword>
<keyword id="KW-0829">Tyrosine-protein kinase</keyword>
<keyword id="KW-0832">Ubl conjugation</keyword>
<accession>Q07DY1</accession>
<reference key="1">
    <citation type="submission" date="2006-09" db="EMBL/GenBank/DDBJ databases">
        <title>NISC comparative sequencing initiative.</title>
        <authorList>
            <person name="Antonellis A."/>
            <person name="Ayele K."/>
            <person name="Benjamin B."/>
            <person name="Blakesley R.W."/>
            <person name="Boakye A."/>
            <person name="Bouffard G.G."/>
            <person name="Brinkley C."/>
            <person name="Brooks S."/>
            <person name="Chu G."/>
            <person name="Coleman H."/>
            <person name="Engle J."/>
            <person name="Gestole M."/>
            <person name="Greene A."/>
            <person name="Guan X."/>
            <person name="Gupta J."/>
            <person name="Haghighi P."/>
            <person name="Han J."/>
            <person name="Hansen N."/>
            <person name="Ho S.-L."/>
            <person name="Hu P."/>
            <person name="Hunter G."/>
            <person name="Hurle B."/>
            <person name="Idol J.R."/>
            <person name="Kwong P."/>
            <person name="Laric P."/>
            <person name="Larson S."/>
            <person name="Lee-Lin S.-Q."/>
            <person name="Legaspi R."/>
            <person name="Madden M."/>
            <person name="Maduro Q.L."/>
            <person name="Maduro V.B."/>
            <person name="Margulies E.H."/>
            <person name="Masiello C."/>
            <person name="Maskeri B."/>
            <person name="McDowell J."/>
            <person name="Mojidi H.A."/>
            <person name="Mullikin J.C."/>
            <person name="Oestreicher J.S."/>
            <person name="Park M."/>
            <person name="Portnoy M.E."/>
            <person name="Prasad A."/>
            <person name="Puri O."/>
            <person name="Reddix-Dugue N."/>
            <person name="Schandler K."/>
            <person name="Schueler M.G."/>
            <person name="Sison C."/>
            <person name="Stantripop S."/>
            <person name="Stephen E."/>
            <person name="Taye A."/>
            <person name="Thomas J.W."/>
            <person name="Thomas P.J."/>
            <person name="Tsipouri V."/>
            <person name="Ung L."/>
            <person name="Vogt J.L."/>
            <person name="Wetherby K.D."/>
            <person name="Young A."/>
            <person name="Green E.D."/>
        </authorList>
    </citation>
    <scope>NUCLEOTIDE SEQUENCE [LARGE SCALE GENOMIC DNA]</scope>
</reference>
<sequence length="1390" mass="155521">MKTPAVLAPGILVLLFTLVQRSNGECKEALAKSKMNVNMKYQLPNFTAETPIQNVILHEHHIFLGATNYIYVLNEEDLQKVAEYKTGPVLEHPDCFPCQDCSSKANLSGGVWKDNINMALVVDTYYDDQLISCGSINRGTCQRHVFPHNHTADIQSEVHCIFSPQIEEPSQCPDCVVSALGAKVLSSVKDRFINFFVGNTINSSYFPDHPLHSISVRRLKETKDGFMFLTDQSYIDVLPEFRDSYPIKYVHAFESNNFIYFLTVQRETLDAQTFHTRIIRFCSINSGLHSYMEMPLECILTEKRKKRSTKKEVFNILQAAYVSKPGAQLARQIGASLNDDILFGVFAQSKPDSAEPMDRSAMCAFPIKYVNDFFNKIVNKNNVRCLQHFYGPNHEHCFNRTLLRNSSGCEARRDEYRTEFTTALQRVDLFMGQFSEVLLTSVSTFIKGDLTIANLGTSEGRFMQVVVSRSGPSTPHVNFLLDSHPVSPEVIVEHPLNQNGYTLVVTGKKITKIPLSGLGCRHFQSCSQCLSAPPFVQCGWCHDKCVRSEECPSGTWTQQICLPAIYKVFPNSAPLEGGTRLTICGWDFGFRRNNKFDLKKTRVLLGNESCTLTLSESTMNTLKCTVGPAMNKHFNMSITISNGHGTTQYSTFSYVDPVITSISPKYGPMAGGTLLTLTGNYLNSGNSRHISIGGKTCTLKSVSNSILECYTPAQTISTEFAVKLKIDLANRETNIFSYREDPIVYEIHPTKSFISGGSTITGVGKNLNSVSVPRMVINVHEAGRNFTVACQHRSNSEIICCTTPSLQQLNLQLPLKTKAFFMLDGILSKYFDLIYVHNPVFKPFEKPVMISMGNENVLEIKGNDIDPEAVKGEVLKVGNKSCENIHLHSEAVLCTVPNDLLKLNSELNIEWKQAISSTVLGKVIVQPDQNFTGLIAGVVSISVALLLLLGFFLWLKKRKQIKDLGSELVRYDARVHTPHLDRLVSARSVSPTTEMVSNESVDYRATFPEDQFPNSSQNGSCRQVQYPLTDMSPILTSGDSDISSPLLQNTVHIDLSALNPELVQAVQHVVIGPSSLIVHFNEVIGRGHFGCVYHGTLLDNDGKKIHCAVKSLNRITDIGEVSQFLTEGIIMKDFSHPNVLSLLGICLRSEGSPLVVLPYMKHGDLRNFIRNETHNPTVKDLIGFGLQVAKGMKYLASKKFVHRDLAARNCMLDEKFTVKVADFGLARDMYDKEYYSVHNKTGAKLPVKWMALESLQTQKFTTKSDVWSFGVLLWELMTRGAPPYPDVNTFDITVYLLQGRRLLQPEYCPDPLYEVMLKCWHPKAEMRPSFSELVSRISAIFSTFIGEHYVHVNATYVNVKCVAPYPSLLSSEDNADNEVDTRPASFWETS</sequence>
<dbReference type="EC" id="2.7.10.1"/>
<dbReference type="EMBL" id="DP000194">
    <property type="protein sequence ID" value="ABJ08861.1"/>
    <property type="molecule type" value="Genomic_DNA"/>
</dbReference>
<dbReference type="RefSeq" id="XP_003261277.2">
    <property type="nucleotide sequence ID" value="XM_003261229.3"/>
</dbReference>
<dbReference type="SMR" id="Q07DY1"/>
<dbReference type="FunCoup" id="Q07DY1">
    <property type="interactions" value="981"/>
</dbReference>
<dbReference type="STRING" id="61853.ENSNLEP00000024614"/>
<dbReference type="GlyCosmos" id="Q07DY1">
    <property type="glycosylation" value="11 sites, No reported glycans"/>
</dbReference>
<dbReference type="GeneID" id="100597172"/>
<dbReference type="eggNOG" id="KOG1095">
    <property type="taxonomic scope" value="Eukaryota"/>
</dbReference>
<dbReference type="eggNOG" id="KOG3610">
    <property type="taxonomic scope" value="Eukaryota"/>
</dbReference>
<dbReference type="InParanoid" id="Q07DY1"/>
<dbReference type="Proteomes" id="UP000001073">
    <property type="component" value="Unplaced"/>
</dbReference>
<dbReference type="GO" id="GO:0005886">
    <property type="term" value="C:plasma membrane"/>
    <property type="evidence" value="ECO:0007669"/>
    <property type="project" value="TreeGrafter"/>
</dbReference>
<dbReference type="GO" id="GO:0002116">
    <property type="term" value="C:semaphorin receptor complex"/>
    <property type="evidence" value="ECO:0007669"/>
    <property type="project" value="TreeGrafter"/>
</dbReference>
<dbReference type="GO" id="GO:0005524">
    <property type="term" value="F:ATP binding"/>
    <property type="evidence" value="ECO:0007669"/>
    <property type="project" value="UniProtKB-KW"/>
</dbReference>
<dbReference type="GO" id="GO:0017154">
    <property type="term" value="F:semaphorin receptor activity"/>
    <property type="evidence" value="ECO:0007669"/>
    <property type="project" value="InterPro"/>
</dbReference>
<dbReference type="GO" id="GO:0004714">
    <property type="term" value="F:transmembrane receptor protein tyrosine kinase activity"/>
    <property type="evidence" value="ECO:0007669"/>
    <property type="project" value="UniProtKB-EC"/>
</dbReference>
<dbReference type="GO" id="GO:0007169">
    <property type="term" value="P:cell surface receptor protein tyrosine kinase signaling pathway"/>
    <property type="evidence" value="ECO:0007669"/>
    <property type="project" value="InterPro"/>
</dbReference>
<dbReference type="GO" id="GO:0050918">
    <property type="term" value="P:positive chemotaxis"/>
    <property type="evidence" value="ECO:0000250"/>
    <property type="project" value="UniProtKB"/>
</dbReference>
<dbReference type="GO" id="GO:2001028">
    <property type="term" value="P:positive regulation of endothelial cell chemotaxis"/>
    <property type="evidence" value="ECO:0000250"/>
    <property type="project" value="UniProtKB"/>
</dbReference>
<dbReference type="GO" id="GO:0071526">
    <property type="term" value="P:semaphorin-plexin signaling pathway"/>
    <property type="evidence" value="ECO:0000250"/>
    <property type="project" value="UniProtKB"/>
</dbReference>
<dbReference type="CDD" id="cd00603">
    <property type="entry name" value="IPT_PCSR"/>
    <property type="match status" value="1"/>
</dbReference>
<dbReference type="CDD" id="cd01180">
    <property type="entry name" value="IPT_plexin_repeat1"/>
    <property type="match status" value="1"/>
</dbReference>
<dbReference type="CDD" id="cd01179">
    <property type="entry name" value="IPT_plexin_repeat2"/>
    <property type="match status" value="1"/>
</dbReference>
<dbReference type="CDD" id="cd01181">
    <property type="entry name" value="IPT_plexin_repeat3"/>
    <property type="match status" value="1"/>
</dbReference>
<dbReference type="CDD" id="cd05058">
    <property type="entry name" value="PTKc_Met_Ron"/>
    <property type="match status" value="1"/>
</dbReference>
<dbReference type="CDD" id="cd11278">
    <property type="entry name" value="Sema_MET"/>
    <property type="match status" value="1"/>
</dbReference>
<dbReference type="FunFam" id="1.10.510.10:FF:000093">
    <property type="entry name" value="Hepatocyte growth factor receptor"/>
    <property type="match status" value="1"/>
</dbReference>
<dbReference type="FunFam" id="2.130.10.10:FF:000088">
    <property type="entry name" value="Hepatocyte growth factor receptor"/>
    <property type="match status" value="1"/>
</dbReference>
<dbReference type="FunFam" id="2.60.40.10:FF:000213">
    <property type="entry name" value="Hepatocyte growth factor receptor"/>
    <property type="match status" value="1"/>
</dbReference>
<dbReference type="FunFam" id="2.60.40.10:FF:000400">
    <property type="entry name" value="Hepatocyte growth factor receptor"/>
    <property type="match status" value="1"/>
</dbReference>
<dbReference type="FunFam" id="2.60.40.10:FF:002708">
    <property type="entry name" value="Hepatocyte growth factor receptor"/>
    <property type="match status" value="1"/>
</dbReference>
<dbReference type="FunFam" id="3.30.200.20:FF:000188">
    <property type="entry name" value="Hepatocyte growth factor receptor"/>
    <property type="match status" value="1"/>
</dbReference>
<dbReference type="FunFam" id="3.30.1680.10:FF:000006">
    <property type="entry name" value="Macrophage-stimulating 1 receptor b"/>
    <property type="match status" value="1"/>
</dbReference>
<dbReference type="Gene3D" id="2.60.40.10">
    <property type="entry name" value="Immunoglobulins"/>
    <property type="match status" value="3"/>
</dbReference>
<dbReference type="Gene3D" id="3.30.200.20">
    <property type="entry name" value="Phosphorylase Kinase, domain 1"/>
    <property type="match status" value="1"/>
</dbReference>
<dbReference type="Gene3D" id="1.10.510.10">
    <property type="entry name" value="Transferase(Phosphotransferase) domain 1"/>
    <property type="match status" value="1"/>
</dbReference>
<dbReference type="Gene3D" id="2.130.10.10">
    <property type="entry name" value="YVTN repeat-like/Quinoprotein amine dehydrogenase"/>
    <property type="match status" value="1"/>
</dbReference>
<dbReference type="InterPro" id="IPR013783">
    <property type="entry name" value="Ig-like_fold"/>
</dbReference>
<dbReference type="InterPro" id="IPR014756">
    <property type="entry name" value="Ig_E-set"/>
</dbReference>
<dbReference type="InterPro" id="IPR002909">
    <property type="entry name" value="IPT_dom"/>
</dbReference>
<dbReference type="InterPro" id="IPR011009">
    <property type="entry name" value="Kinase-like_dom_sf"/>
</dbReference>
<dbReference type="InterPro" id="IPR031148">
    <property type="entry name" value="Plexin"/>
</dbReference>
<dbReference type="InterPro" id="IPR002165">
    <property type="entry name" value="Plexin_repeat"/>
</dbReference>
<dbReference type="InterPro" id="IPR000719">
    <property type="entry name" value="Prot_kinase_dom"/>
</dbReference>
<dbReference type="InterPro" id="IPR017441">
    <property type="entry name" value="Protein_kinase_ATP_BS"/>
</dbReference>
<dbReference type="InterPro" id="IPR016201">
    <property type="entry name" value="PSI"/>
</dbReference>
<dbReference type="InterPro" id="IPR001627">
    <property type="entry name" value="Semap_dom"/>
</dbReference>
<dbReference type="InterPro" id="IPR036352">
    <property type="entry name" value="Semap_dom_sf"/>
</dbReference>
<dbReference type="InterPro" id="IPR001245">
    <property type="entry name" value="Ser-Thr/Tyr_kinase_cat_dom"/>
</dbReference>
<dbReference type="InterPro" id="IPR008266">
    <property type="entry name" value="Tyr_kinase_AS"/>
</dbReference>
<dbReference type="InterPro" id="IPR020635">
    <property type="entry name" value="Tyr_kinase_cat_dom"/>
</dbReference>
<dbReference type="InterPro" id="IPR016244">
    <property type="entry name" value="Tyr_kinase_HGF/MSP_rcpt"/>
</dbReference>
<dbReference type="InterPro" id="IPR015943">
    <property type="entry name" value="WD40/YVTN_repeat-like_dom_sf"/>
</dbReference>
<dbReference type="PANTHER" id="PTHR22625:SF61">
    <property type="entry name" value="HEPATOCYTE GROWTH FACTOR RECEPTOR"/>
    <property type="match status" value="1"/>
</dbReference>
<dbReference type="PANTHER" id="PTHR22625">
    <property type="entry name" value="PLEXIN"/>
    <property type="match status" value="1"/>
</dbReference>
<dbReference type="Pfam" id="PF07714">
    <property type="entry name" value="PK_Tyr_Ser-Thr"/>
    <property type="match status" value="1"/>
</dbReference>
<dbReference type="Pfam" id="PF01437">
    <property type="entry name" value="PSI"/>
    <property type="match status" value="1"/>
</dbReference>
<dbReference type="Pfam" id="PF01403">
    <property type="entry name" value="Sema"/>
    <property type="match status" value="1"/>
</dbReference>
<dbReference type="Pfam" id="PF01833">
    <property type="entry name" value="TIG"/>
    <property type="match status" value="3"/>
</dbReference>
<dbReference type="PIRSF" id="PIRSF000617">
    <property type="entry name" value="TyrPK_HGF-R"/>
    <property type="match status" value="1"/>
</dbReference>
<dbReference type="PRINTS" id="PR00109">
    <property type="entry name" value="TYRKINASE"/>
</dbReference>
<dbReference type="SMART" id="SM00429">
    <property type="entry name" value="IPT"/>
    <property type="match status" value="4"/>
</dbReference>
<dbReference type="SMART" id="SM00423">
    <property type="entry name" value="PSI"/>
    <property type="match status" value="1"/>
</dbReference>
<dbReference type="SMART" id="SM00630">
    <property type="entry name" value="Sema"/>
    <property type="match status" value="1"/>
</dbReference>
<dbReference type="SMART" id="SM00219">
    <property type="entry name" value="TyrKc"/>
    <property type="match status" value="1"/>
</dbReference>
<dbReference type="SUPFAM" id="SSF81296">
    <property type="entry name" value="E set domains"/>
    <property type="match status" value="3"/>
</dbReference>
<dbReference type="SUPFAM" id="SSF103575">
    <property type="entry name" value="Plexin repeat"/>
    <property type="match status" value="1"/>
</dbReference>
<dbReference type="SUPFAM" id="SSF56112">
    <property type="entry name" value="Protein kinase-like (PK-like)"/>
    <property type="match status" value="1"/>
</dbReference>
<dbReference type="SUPFAM" id="SSF101912">
    <property type="entry name" value="Sema domain"/>
    <property type="match status" value="1"/>
</dbReference>
<dbReference type="PROSITE" id="PS00107">
    <property type="entry name" value="PROTEIN_KINASE_ATP"/>
    <property type="match status" value="1"/>
</dbReference>
<dbReference type="PROSITE" id="PS50011">
    <property type="entry name" value="PROTEIN_KINASE_DOM"/>
    <property type="match status" value="1"/>
</dbReference>
<dbReference type="PROSITE" id="PS00109">
    <property type="entry name" value="PROTEIN_KINASE_TYR"/>
    <property type="match status" value="1"/>
</dbReference>
<dbReference type="PROSITE" id="PS51004">
    <property type="entry name" value="SEMA"/>
    <property type="match status" value="1"/>
</dbReference>
<gene>
    <name type="primary">MET</name>
</gene>
<comment type="function">
    <text evidence="1">Receptor tyrosine kinase that transduces signals from the extracellular matrix into the cytoplasm by binding to hepatocyte growth factor/HGF ligand. Regulates many physiological processes including proliferation, scattering, morphogenesis and survival. Ligand binding at the cell surface induces autophosphorylation of MET on its intracellular domain that provides docking sites for downstream signaling molecules. Following activation by ligand, interacts with the PI3-kinase subunit PIK3R1, PLCG1, SRC, GRB2, STAT3 or the adapter GAB1. Recruitment of these downstream effectors by MET leads to the activation of several signaling cascades including the RAS-ERK, PI3 kinase-AKT, or PLCgamma-PKC. The RAS-ERK activation is associated with the morphogenetic effects while PI3K/AKT coordinates prosurvival effects. During embryonic development, MET signaling plays a role in gastrulation, development and migration of muscles and neuronal precursors, angiogenesis and kidney formation. In adults, participates in wound healing as well as organ regeneration and tissue remodeling. Also promotes differentiation and proliferation of hematopoietic cells (By similarity).</text>
</comment>
<comment type="catalytic activity">
    <reaction evidence="7">
        <text>L-tyrosyl-[protein] + ATP = O-phospho-L-tyrosyl-[protein] + ADP + H(+)</text>
        <dbReference type="Rhea" id="RHEA:10596"/>
        <dbReference type="Rhea" id="RHEA-COMP:10136"/>
        <dbReference type="Rhea" id="RHEA-COMP:20101"/>
        <dbReference type="ChEBI" id="CHEBI:15378"/>
        <dbReference type="ChEBI" id="CHEBI:30616"/>
        <dbReference type="ChEBI" id="CHEBI:46858"/>
        <dbReference type="ChEBI" id="CHEBI:61978"/>
        <dbReference type="ChEBI" id="CHEBI:456216"/>
        <dbReference type="EC" id="2.7.10.1"/>
    </reaction>
</comment>
<comment type="activity regulation">
    <text evidence="1">In its inactive state, the C-terminal tail interacts with the catalytic domain and inhibits the kinase activity. Upon ligand binding, the C-terminal tail is displaced and becomes phosphorylated, thus increasing the kinase activity (By similarity).</text>
</comment>
<comment type="subunit">
    <text evidence="2 3">Heterodimer made of an alpha chain (50 kDa) and a beta chain (145 kDa) which are disulfide linked. Binds PLXNB1. Interacts when phosphorylated with downstream effectors including STAT3, PIK3R1, SRC, PCLG1, GRB2 and GAB1. Interacts with SPSB1, SPSB2 and SPSB4. Interacts with INPP5D/SHIP1. When phosphorylated at Tyr-1356, interacts with INPPL1/SHIP2. Interacts with RANBP9 and RANBP10, as well as SPSB1, SPSB2, SPSB3 and SPSB4. SPSB1 binding occurs in the presence and in the absence of HGF, however HGF treatment has a positive effect on this interaction. Interacts with MUC20; prevents interaction with GRB2 and suppresses hepatocyte growth factor-induced cell proliferation. Interacts with GRB10. Interacts with PTPN1 and PTPN2. Interacts with HSP90AA1 and HSP90AB1; the interaction suppresses MET kinase activity. Interacts with tensin TNS3 (By similarity). Interacts (when phosphorylated) with tensin TNS4 (via SH2 domain); the interaction increases MET protein stability by inhibiting MET endocytosis and subsequent lysosomal degradation (By similarity).</text>
</comment>
<comment type="subcellular location">
    <subcellularLocation>
        <location evidence="1">Membrane</location>
        <topology evidence="1">Single-pass type I membrane protein</topology>
    </subcellularLocation>
</comment>
<comment type="domain">
    <text evidence="1">The kinase domain is involved in SPSB1 binding.</text>
</comment>
<comment type="domain">
    <text evidence="1">The beta-propeller Sema domain mediates binding to HGF.</text>
</comment>
<comment type="PTM">
    <text evidence="2">Autophosphorylated in response to ligand binding on Tyr-1234 and Tyr-1235 in the kinase domain leading to further phosphorylation of Tyr-1349 and Tyr-1356 in the C-terminal multifunctional docking site. Dephosphorylated by PTPRJ at Tyr-1349 and Tyr-1365. Dephosphorylated by PTPN1 and PTPN2 (By similarity).</text>
</comment>
<comment type="PTM">
    <text evidence="2">Ubiquitinated. Ubiquitination by CBL regulates the receptor stability and activity through proteasomal degradation (By similarity).</text>
</comment>
<comment type="PTM">
    <text evidence="2">O-mannosylation of IPT/TIG domains by TMEM260 is required for protein maturation. O-mannosylated residues are composed of single mannose glycans that are not elongated or modified.</text>
</comment>
<comment type="similarity">
    <text evidence="5">Belongs to the protein kinase superfamily. Tyr protein kinase family.</text>
</comment>
<proteinExistence type="inferred from homology"/>
<evidence type="ECO:0000250" key="1"/>
<evidence type="ECO:0000250" key="2">
    <source>
        <dbReference type="UniProtKB" id="P08581"/>
    </source>
</evidence>
<evidence type="ECO:0000250" key="3">
    <source>
        <dbReference type="UniProtKB" id="P16056"/>
    </source>
</evidence>
<evidence type="ECO:0000255" key="4"/>
<evidence type="ECO:0000255" key="5">
    <source>
        <dbReference type="PROSITE-ProRule" id="PRU00159"/>
    </source>
</evidence>
<evidence type="ECO:0000255" key="6">
    <source>
        <dbReference type="PROSITE-ProRule" id="PRU00352"/>
    </source>
</evidence>
<evidence type="ECO:0000255" key="7">
    <source>
        <dbReference type="PROSITE-ProRule" id="PRU10028"/>
    </source>
</evidence>